<gene>
    <name evidence="1" type="primary">hisE</name>
    <name type="ordered locus">Lxx11210</name>
</gene>
<comment type="catalytic activity">
    <reaction evidence="1">
        <text>1-(5-phospho-beta-D-ribosyl)-ATP + H2O = 1-(5-phospho-beta-D-ribosyl)-5'-AMP + diphosphate + H(+)</text>
        <dbReference type="Rhea" id="RHEA:22828"/>
        <dbReference type="ChEBI" id="CHEBI:15377"/>
        <dbReference type="ChEBI" id="CHEBI:15378"/>
        <dbReference type="ChEBI" id="CHEBI:33019"/>
        <dbReference type="ChEBI" id="CHEBI:59457"/>
        <dbReference type="ChEBI" id="CHEBI:73183"/>
        <dbReference type="EC" id="3.6.1.31"/>
    </reaction>
</comment>
<comment type="pathway">
    <text evidence="1">Amino-acid biosynthesis; L-histidine biosynthesis; L-histidine from 5-phospho-alpha-D-ribose 1-diphosphate: step 2/9.</text>
</comment>
<comment type="subcellular location">
    <subcellularLocation>
        <location evidence="1">Cytoplasm</location>
    </subcellularLocation>
</comment>
<comment type="similarity">
    <text evidence="1">Belongs to the PRA-PH family.</text>
</comment>
<evidence type="ECO:0000255" key="1">
    <source>
        <dbReference type="HAMAP-Rule" id="MF_01020"/>
    </source>
</evidence>
<protein>
    <recommendedName>
        <fullName evidence="1">Phosphoribosyl-ATP pyrophosphatase</fullName>
        <shortName evidence="1">PRA-PH</shortName>
        <ecNumber evidence="1">3.6.1.31</ecNumber>
    </recommendedName>
</protein>
<accession>Q6AF75</accession>
<dbReference type="EC" id="3.6.1.31" evidence="1"/>
<dbReference type="EMBL" id="AE016822">
    <property type="protein sequence ID" value="AAT88970.1"/>
    <property type="molecule type" value="Genomic_DNA"/>
</dbReference>
<dbReference type="RefSeq" id="WP_011185966.1">
    <property type="nucleotide sequence ID" value="NC_006087.1"/>
</dbReference>
<dbReference type="SMR" id="Q6AF75"/>
<dbReference type="STRING" id="281090.Lxx11210"/>
<dbReference type="KEGG" id="lxx:Lxx11210"/>
<dbReference type="eggNOG" id="COG0140">
    <property type="taxonomic scope" value="Bacteria"/>
</dbReference>
<dbReference type="HOGENOM" id="CLU_123337_2_1_11"/>
<dbReference type="UniPathway" id="UPA00031">
    <property type="reaction ID" value="UER00007"/>
</dbReference>
<dbReference type="Proteomes" id="UP000001306">
    <property type="component" value="Chromosome"/>
</dbReference>
<dbReference type="GO" id="GO:0005737">
    <property type="term" value="C:cytoplasm"/>
    <property type="evidence" value="ECO:0007669"/>
    <property type="project" value="UniProtKB-SubCell"/>
</dbReference>
<dbReference type="GO" id="GO:0005524">
    <property type="term" value="F:ATP binding"/>
    <property type="evidence" value="ECO:0007669"/>
    <property type="project" value="UniProtKB-KW"/>
</dbReference>
<dbReference type="GO" id="GO:0004636">
    <property type="term" value="F:phosphoribosyl-ATP diphosphatase activity"/>
    <property type="evidence" value="ECO:0007669"/>
    <property type="project" value="UniProtKB-UniRule"/>
</dbReference>
<dbReference type="GO" id="GO:0000105">
    <property type="term" value="P:L-histidine biosynthetic process"/>
    <property type="evidence" value="ECO:0007669"/>
    <property type="project" value="UniProtKB-UniRule"/>
</dbReference>
<dbReference type="CDD" id="cd11547">
    <property type="entry name" value="NTP-PPase_HisE"/>
    <property type="match status" value="1"/>
</dbReference>
<dbReference type="Gene3D" id="1.10.287.1080">
    <property type="entry name" value="MazG-like"/>
    <property type="match status" value="1"/>
</dbReference>
<dbReference type="HAMAP" id="MF_01020">
    <property type="entry name" value="HisE"/>
    <property type="match status" value="1"/>
</dbReference>
<dbReference type="InterPro" id="IPR008179">
    <property type="entry name" value="HisE"/>
</dbReference>
<dbReference type="InterPro" id="IPR021130">
    <property type="entry name" value="PRib-ATP_PPHydrolase-like"/>
</dbReference>
<dbReference type="NCBIfam" id="TIGR03188">
    <property type="entry name" value="histidine_hisI"/>
    <property type="match status" value="1"/>
</dbReference>
<dbReference type="NCBIfam" id="NF001610">
    <property type="entry name" value="PRK00400.1-1"/>
    <property type="match status" value="1"/>
</dbReference>
<dbReference type="PANTHER" id="PTHR42945">
    <property type="entry name" value="HISTIDINE BIOSYNTHESIS BIFUNCTIONAL PROTEIN"/>
    <property type="match status" value="1"/>
</dbReference>
<dbReference type="PANTHER" id="PTHR42945:SF1">
    <property type="entry name" value="HISTIDINE BIOSYNTHESIS BIFUNCTIONAL PROTEIN HIS7"/>
    <property type="match status" value="1"/>
</dbReference>
<dbReference type="Pfam" id="PF01503">
    <property type="entry name" value="PRA-PH"/>
    <property type="match status" value="1"/>
</dbReference>
<dbReference type="SUPFAM" id="SSF101386">
    <property type="entry name" value="all-alpha NTP pyrophosphatases"/>
    <property type="match status" value="1"/>
</dbReference>
<proteinExistence type="inferred from homology"/>
<feature type="chain" id="PRO_0000230177" description="Phosphoribosyl-ATP pyrophosphatase">
    <location>
        <begin position="1"/>
        <end position="87"/>
    </location>
</feature>
<name>HIS2_LEIXX</name>
<sequence length="87" mass="9635">MKTFDDLFAELSEKAATRPEGSGTVRELDAGVHSIGKKIVEEAAEVWMAAEHESDEAFAEEASQLIYHLQVMMLAKGLTLADVYRHL</sequence>
<organism>
    <name type="scientific">Leifsonia xyli subsp. xyli (strain CTCB07)</name>
    <dbReference type="NCBI Taxonomy" id="281090"/>
    <lineage>
        <taxon>Bacteria</taxon>
        <taxon>Bacillati</taxon>
        <taxon>Actinomycetota</taxon>
        <taxon>Actinomycetes</taxon>
        <taxon>Micrococcales</taxon>
        <taxon>Microbacteriaceae</taxon>
        <taxon>Leifsonia</taxon>
    </lineage>
</organism>
<keyword id="KW-0028">Amino-acid biosynthesis</keyword>
<keyword id="KW-0067">ATP-binding</keyword>
<keyword id="KW-0963">Cytoplasm</keyword>
<keyword id="KW-0368">Histidine biosynthesis</keyword>
<keyword id="KW-0378">Hydrolase</keyword>
<keyword id="KW-0547">Nucleotide-binding</keyword>
<keyword id="KW-1185">Reference proteome</keyword>
<reference key="1">
    <citation type="journal article" date="2004" name="Mol. Plant Microbe Interact.">
        <title>The genome sequence of the Gram-positive sugarcane pathogen Leifsonia xyli subsp. xyli.</title>
        <authorList>
            <person name="Monteiro-Vitorello C.B."/>
            <person name="Camargo L.E.A."/>
            <person name="Van Sluys M.A."/>
            <person name="Kitajima J.P."/>
            <person name="Truffi D."/>
            <person name="do Amaral A.M."/>
            <person name="Harakava R."/>
            <person name="de Oliveira J.C.F."/>
            <person name="Wood D."/>
            <person name="de Oliveira M.C."/>
            <person name="Miyaki C.Y."/>
            <person name="Takita M.A."/>
            <person name="da Silva A.C.R."/>
            <person name="Furlan L.R."/>
            <person name="Carraro D.M."/>
            <person name="Camarotte G."/>
            <person name="Almeida N.F. Jr."/>
            <person name="Carrer H."/>
            <person name="Coutinho L.L."/>
            <person name="El-Dorry H.A."/>
            <person name="Ferro M.I.T."/>
            <person name="Gagliardi P.R."/>
            <person name="Giglioti E."/>
            <person name="Goldman M.H.S."/>
            <person name="Goldman G.H."/>
            <person name="Kimura E.T."/>
            <person name="Ferro E.S."/>
            <person name="Kuramae E.E."/>
            <person name="Lemos E.G.M."/>
            <person name="Lemos M.V.F."/>
            <person name="Mauro S.M.Z."/>
            <person name="Machado M.A."/>
            <person name="Marino C.L."/>
            <person name="Menck C.F."/>
            <person name="Nunes L.R."/>
            <person name="Oliveira R.C."/>
            <person name="Pereira G.G."/>
            <person name="Siqueira W."/>
            <person name="de Souza A.A."/>
            <person name="Tsai S.M."/>
            <person name="Zanca A.S."/>
            <person name="Simpson A.J.G."/>
            <person name="Brumbley S.M."/>
            <person name="Setubal J.C."/>
        </authorList>
    </citation>
    <scope>NUCLEOTIDE SEQUENCE [LARGE SCALE GENOMIC DNA]</scope>
    <source>
        <strain>CTCB07</strain>
    </source>
</reference>